<dbReference type="EC" id="5.3.1.16"/>
<dbReference type="EMBL" id="AE009441">
    <property type="protein sequence ID" value="AAL63182.1"/>
    <property type="molecule type" value="Genomic_DNA"/>
</dbReference>
<dbReference type="RefSeq" id="WP_011007654.1">
    <property type="nucleotide sequence ID" value="NC_003364.1"/>
</dbReference>
<dbReference type="SMR" id="Q8ZY14"/>
<dbReference type="FunCoup" id="Q8ZY14">
    <property type="interactions" value="75"/>
</dbReference>
<dbReference type="STRING" id="178306.PAE0991"/>
<dbReference type="EnsemblBacteria" id="AAL63182">
    <property type="protein sequence ID" value="AAL63182"/>
    <property type="gene ID" value="PAE0991"/>
</dbReference>
<dbReference type="GeneID" id="1465417"/>
<dbReference type="KEGG" id="pai:PAE0991"/>
<dbReference type="PATRIC" id="fig|178306.9.peg.737"/>
<dbReference type="eggNOG" id="arCOG00618">
    <property type="taxonomic scope" value="Archaea"/>
</dbReference>
<dbReference type="HOGENOM" id="CLU_048577_1_1_2"/>
<dbReference type="InParanoid" id="Q8ZY14"/>
<dbReference type="UniPathway" id="UPA00031">
    <property type="reaction ID" value="UER00009"/>
</dbReference>
<dbReference type="Proteomes" id="UP000002439">
    <property type="component" value="Chromosome"/>
</dbReference>
<dbReference type="GO" id="GO:0005737">
    <property type="term" value="C:cytoplasm"/>
    <property type="evidence" value="ECO:0000318"/>
    <property type="project" value="GO_Central"/>
</dbReference>
<dbReference type="GO" id="GO:0003949">
    <property type="term" value="F:1-(5-phosphoribosyl)-5-[(5-phosphoribosylamino)methylideneamino]imidazole-4-carboxamide isomerase activity"/>
    <property type="evidence" value="ECO:0000318"/>
    <property type="project" value="GO_Central"/>
</dbReference>
<dbReference type="GO" id="GO:0000105">
    <property type="term" value="P:L-histidine biosynthetic process"/>
    <property type="evidence" value="ECO:0000318"/>
    <property type="project" value="GO_Central"/>
</dbReference>
<dbReference type="CDD" id="cd04732">
    <property type="entry name" value="HisA"/>
    <property type="match status" value="1"/>
</dbReference>
<dbReference type="Gene3D" id="3.20.20.70">
    <property type="entry name" value="Aldolase class I"/>
    <property type="match status" value="1"/>
</dbReference>
<dbReference type="InterPro" id="IPR013785">
    <property type="entry name" value="Aldolase_TIM"/>
</dbReference>
<dbReference type="InterPro" id="IPR006062">
    <property type="entry name" value="His_biosynth"/>
</dbReference>
<dbReference type="InterPro" id="IPR044524">
    <property type="entry name" value="Isoase_HisA-like"/>
</dbReference>
<dbReference type="InterPro" id="IPR023016">
    <property type="entry name" value="Isoase_HisA-like_bact"/>
</dbReference>
<dbReference type="InterPro" id="IPR011060">
    <property type="entry name" value="RibuloseP-bd_barrel"/>
</dbReference>
<dbReference type="PANTHER" id="PTHR43090">
    <property type="entry name" value="1-(5-PHOSPHORIBOSYL)-5-[(5-PHOSPHORIBOSYLAMINO)METHYLIDENEAMINO] IMIDAZOLE-4-CARBOXAMIDE ISOMERASE"/>
    <property type="match status" value="1"/>
</dbReference>
<dbReference type="PANTHER" id="PTHR43090:SF2">
    <property type="entry name" value="1-(5-PHOSPHORIBOSYL)-5-[(5-PHOSPHORIBOSYLAMINO)METHYLIDENEAMINO] IMIDAZOLE-4-CARBOXAMIDE ISOMERASE"/>
    <property type="match status" value="1"/>
</dbReference>
<dbReference type="Pfam" id="PF00977">
    <property type="entry name" value="His_biosynth"/>
    <property type="match status" value="1"/>
</dbReference>
<dbReference type="SUPFAM" id="SSF51366">
    <property type="entry name" value="Ribulose-phoshate binding barrel"/>
    <property type="match status" value="1"/>
</dbReference>
<name>HIS4_PYRAE</name>
<feature type="chain" id="PRO_0000142100" description="1-(5-phosphoribosyl)-5-[(5-phosphoribosylamino)methylideneamino] imidazole-4-carboxamide isomerase">
    <location>
        <begin position="1"/>
        <end position="229"/>
    </location>
</feature>
<feature type="active site" description="Proton acceptor" evidence="1">
    <location>
        <position position="7"/>
    </location>
</feature>
<feature type="active site" description="Proton donor" evidence="1">
    <location>
        <position position="124"/>
    </location>
</feature>
<comment type="catalytic activity">
    <reaction>
        <text>1-(5-phospho-beta-D-ribosyl)-5-[(5-phospho-beta-D-ribosylamino)methylideneamino]imidazole-4-carboxamide = 5-[(5-phospho-1-deoxy-D-ribulos-1-ylimino)methylamino]-1-(5-phospho-beta-D-ribosyl)imidazole-4-carboxamide</text>
        <dbReference type="Rhea" id="RHEA:15469"/>
        <dbReference type="ChEBI" id="CHEBI:58435"/>
        <dbReference type="ChEBI" id="CHEBI:58525"/>
        <dbReference type="EC" id="5.3.1.16"/>
    </reaction>
</comment>
<comment type="pathway">
    <text>Amino-acid biosynthesis; L-histidine biosynthesis; L-histidine from 5-phospho-alpha-D-ribose 1-diphosphate: step 4/9.</text>
</comment>
<comment type="subcellular location">
    <subcellularLocation>
        <location evidence="1">Cytoplasm</location>
    </subcellularLocation>
</comment>
<comment type="similarity">
    <text evidence="2">Belongs to the HisA/HisF family.</text>
</comment>
<gene>
    <name type="primary">hisA</name>
    <name type="ordered locus">PAE0991</name>
</gene>
<organism>
    <name type="scientific">Pyrobaculum aerophilum (strain ATCC 51768 / DSM 7523 / JCM 9630 / CIP 104966 / NBRC 100827 / IM2)</name>
    <dbReference type="NCBI Taxonomy" id="178306"/>
    <lineage>
        <taxon>Archaea</taxon>
        <taxon>Thermoproteota</taxon>
        <taxon>Thermoprotei</taxon>
        <taxon>Thermoproteales</taxon>
        <taxon>Thermoproteaceae</taxon>
        <taxon>Pyrobaculum</taxon>
    </lineage>
</organism>
<sequence>MIIPSIDIEGGRAVKRIRGQRGNYIFQGDPLELAARFRKAPLVHVVDLDGAEAGGLVNISVISKIAEILEGRCELGGGLRSLEAVERALSLCQYAVVGSLPFKNWPLFRRAAELYRDRLAVSLDYRGGEVLVGGWREKAASIAEAVRRLEEAGPYAAVIVTSVEVEGTGGGVKADIDVKSLKRIARRVFYAGGVRDCNDVERAYALGFDGVIVGYALYAGDLKKCANWY</sequence>
<protein>
    <recommendedName>
        <fullName>1-(5-phosphoribosyl)-5-[(5-phosphoribosylamino)methylideneamino] imidazole-4-carboxamide isomerase</fullName>
        <ecNumber>5.3.1.16</ecNumber>
    </recommendedName>
    <alternativeName>
        <fullName>Phosphoribosylformimino-5-aminoimidazole carboxamide ribotide isomerase</fullName>
    </alternativeName>
</protein>
<reference key="1">
    <citation type="journal article" date="2002" name="Proc. Natl. Acad. Sci. U.S.A.">
        <title>Genome sequence of the hyperthermophilic crenarchaeon Pyrobaculum aerophilum.</title>
        <authorList>
            <person name="Fitz-Gibbon S.T."/>
            <person name="Ladner H."/>
            <person name="Kim U.-J."/>
            <person name="Stetter K.O."/>
            <person name="Simon M.I."/>
            <person name="Miller J.H."/>
        </authorList>
    </citation>
    <scope>NUCLEOTIDE SEQUENCE [LARGE SCALE GENOMIC DNA]</scope>
    <source>
        <strain>ATCC 51768 / DSM 7523 / JCM 9630 / CIP 104966 / NBRC 100827 / IM2</strain>
    </source>
</reference>
<keyword id="KW-0028">Amino-acid biosynthesis</keyword>
<keyword id="KW-0963">Cytoplasm</keyword>
<keyword id="KW-0368">Histidine biosynthesis</keyword>
<keyword id="KW-0413">Isomerase</keyword>
<keyword id="KW-1185">Reference proteome</keyword>
<proteinExistence type="inferred from homology"/>
<accession>Q8ZY14</accession>
<evidence type="ECO:0000250" key="1"/>
<evidence type="ECO:0000305" key="2"/>